<accession>A2AJ77</accession>
<organism>
    <name type="scientific">Mus musculus</name>
    <name type="common">Mouse</name>
    <dbReference type="NCBI Taxonomy" id="10090"/>
    <lineage>
        <taxon>Eukaryota</taxon>
        <taxon>Metazoa</taxon>
        <taxon>Chordata</taxon>
        <taxon>Craniata</taxon>
        <taxon>Vertebrata</taxon>
        <taxon>Euteleostomi</taxon>
        <taxon>Mammalia</taxon>
        <taxon>Eutheria</taxon>
        <taxon>Euarchontoglires</taxon>
        <taxon>Glires</taxon>
        <taxon>Rodentia</taxon>
        <taxon>Myomorpha</taxon>
        <taxon>Muroidea</taxon>
        <taxon>Muridae</taxon>
        <taxon>Murinae</taxon>
        <taxon>Mus</taxon>
        <taxon>Mus</taxon>
    </lineage>
</organism>
<name>PRD12_MOUSE</name>
<dbReference type="EMBL" id="AL732564">
    <property type="status" value="NOT_ANNOTATED_CDS"/>
    <property type="molecule type" value="Genomic_DNA"/>
</dbReference>
<dbReference type="CCDS" id="CCDS50562.1"/>
<dbReference type="RefSeq" id="NP_001116834.1">
    <property type="nucleotide sequence ID" value="NM_001123362.2"/>
</dbReference>
<dbReference type="RefSeq" id="NP_001414287.1">
    <property type="nucleotide sequence ID" value="NM_001427358.1"/>
</dbReference>
<dbReference type="RefSeq" id="XP_006498224.1">
    <property type="nucleotide sequence ID" value="XM_006498161.3"/>
</dbReference>
<dbReference type="SMR" id="A2AJ77"/>
<dbReference type="FunCoup" id="A2AJ77">
    <property type="interactions" value="1602"/>
</dbReference>
<dbReference type="STRING" id="10090.ENSMUSP00000109098"/>
<dbReference type="iPTMnet" id="A2AJ77"/>
<dbReference type="PhosphoSitePlus" id="A2AJ77"/>
<dbReference type="PaxDb" id="10090-ENSMUSP00000109098"/>
<dbReference type="Antibodypedia" id="17995">
    <property type="antibodies" value="130 antibodies from 26 providers"/>
</dbReference>
<dbReference type="Ensembl" id="ENSMUST00000113470.3">
    <property type="protein sequence ID" value="ENSMUSP00000109098.3"/>
    <property type="gene ID" value="ENSMUSG00000079466.3"/>
</dbReference>
<dbReference type="GeneID" id="381359"/>
<dbReference type="KEGG" id="mmu:381359"/>
<dbReference type="UCSC" id="uc012bto.1">
    <property type="organism name" value="mouse"/>
</dbReference>
<dbReference type="AGR" id="MGI:2685844"/>
<dbReference type="CTD" id="59335"/>
<dbReference type="MGI" id="MGI:2685844">
    <property type="gene designation" value="Prdm12"/>
</dbReference>
<dbReference type="VEuPathDB" id="HostDB:ENSMUSG00000079466"/>
<dbReference type="eggNOG" id="KOG2461">
    <property type="taxonomic scope" value="Eukaryota"/>
</dbReference>
<dbReference type="GeneTree" id="ENSGT00940000161616"/>
<dbReference type="HOGENOM" id="CLU_064013_0_1_1"/>
<dbReference type="InParanoid" id="A2AJ77"/>
<dbReference type="OMA" id="KHEDFHL"/>
<dbReference type="OrthoDB" id="8117402at2759"/>
<dbReference type="PhylomeDB" id="A2AJ77"/>
<dbReference type="TreeFam" id="TF332260"/>
<dbReference type="BioGRID-ORCS" id="381359">
    <property type="hits" value="3 hits in 82 CRISPR screens"/>
</dbReference>
<dbReference type="PRO" id="PR:A2AJ77"/>
<dbReference type="Proteomes" id="UP000000589">
    <property type="component" value="Chromosome 2"/>
</dbReference>
<dbReference type="RNAct" id="A2AJ77">
    <property type="molecule type" value="protein"/>
</dbReference>
<dbReference type="Bgee" id="ENSMUSG00000079466">
    <property type="expression patterns" value="Expressed in cerebral cortex marginal layer and 37 other cell types or tissues"/>
</dbReference>
<dbReference type="GO" id="GO:0005654">
    <property type="term" value="C:nucleoplasm"/>
    <property type="evidence" value="ECO:0007669"/>
    <property type="project" value="Ensembl"/>
</dbReference>
<dbReference type="GO" id="GO:0005634">
    <property type="term" value="C:nucleus"/>
    <property type="evidence" value="ECO:0000266"/>
    <property type="project" value="MGI"/>
</dbReference>
<dbReference type="GO" id="GO:0003677">
    <property type="term" value="F:DNA binding"/>
    <property type="evidence" value="ECO:0007669"/>
    <property type="project" value="UniProtKB-KW"/>
</dbReference>
<dbReference type="GO" id="GO:0140713">
    <property type="term" value="F:histone chaperone activity"/>
    <property type="evidence" value="ECO:0000314"/>
    <property type="project" value="MGI"/>
</dbReference>
<dbReference type="GO" id="GO:1990226">
    <property type="term" value="F:histone methyltransferase binding"/>
    <property type="evidence" value="ECO:0000266"/>
    <property type="project" value="MGI"/>
</dbReference>
<dbReference type="GO" id="GO:0008168">
    <property type="term" value="F:methyltransferase activity"/>
    <property type="evidence" value="ECO:0007669"/>
    <property type="project" value="UniProtKB-KW"/>
</dbReference>
<dbReference type="GO" id="GO:0008270">
    <property type="term" value="F:zinc ion binding"/>
    <property type="evidence" value="ECO:0007669"/>
    <property type="project" value="UniProtKB-KW"/>
</dbReference>
<dbReference type="GO" id="GO:0050965">
    <property type="term" value="P:detection of temperature stimulus involved in sensory perception of pain"/>
    <property type="evidence" value="ECO:0000266"/>
    <property type="project" value="MGI"/>
</dbReference>
<dbReference type="GO" id="GO:0032259">
    <property type="term" value="P:methylation"/>
    <property type="evidence" value="ECO:0007669"/>
    <property type="project" value="UniProtKB-KW"/>
</dbReference>
<dbReference type="GO" id="GO:0000122">
    <property type="term" value="P:negative regulation of transcription by RNA polymerase II"/>
    <property type="evidence" value="ECO:0000314"/>
    <property type="project" value="ARUK-UCL"/>
</dbReference>
<dbReference type="GO" id="GO:0022008">
    <property type="term" value="P:neurogenesis"/>
    <property type="evidence" value="ECO:0000314"/>
    <property type="project" value="MGI"/>
</dbReference>
<dbReference type="GO" id="GO:0031175">
    <property type="term" value="P:neuron projection development"/>
    <property type="evidence" value="ECO:0000266"/>
    <property type="project" value="MGI"/>
</dbReference>
<dbReference type="GO" id="GO:0019233">
    <property type="term" value="P:sensory perception of pain"/>
    <property type="evidence" value="ECO:0000266"/>
    <property type="project" value="MGI"/>
</dbReference>
<dbReference type="CDD" id="cd19196">
    <property type="entry name" value="PR-SET_PRDM12"/>
    <property type="match status" value="1"/>
</dbReference>
<dbReference type="FunFam" id="2.170.270.10:FF:000018">
    <property type="entry name" value="PR domain zinc finger protein 12"/>
    <property type="match status" value="1"/>
</dbReference>
<dbReference type="FunFam" id="3.30.160.60:FF:000501">
    <property type="entry name" value="PR domain zinc finger protein 12"/>
    <property type="match status" value="1"/>
</dbReference>
<dbReference type="FunFam" id="3.30.160.60:FF:000526">
    <property type="entry name" value="PR domain zinc finger protein 12"/>
    <property type="match status" value="1"/>
</dbReference>
<dbReference type="FunFam" id="3.30.160.60:FF:001416">
    <property type="entry name" value="PR domain zinc finger protein 12"/>
    <property type="match status" value="1"/>
</dbReference>
<dbReference type="Gene3D" id="3.30.160.60">
    <property type="entry name" value="Classic Zinc Finger"/>
    <property type="match status" value="3"/>
</dbReference>
<dbReference type="Gene3D" id="2.170.270.10">
    <property type="entry name" value="SET domain"/>
    <property type="match status" value="1"/>
</dbReference>
<dbReference type="InterPro" id="IPR044406">
    <property type="entry name" value="PRDM12_PR/SET"/>
</dbReference>
<dbReference type="InterPro" id="IPR001214">
    <property type="entry name" value="SET_dom"/>
</dbReference>
<dbReference type="InterPro" id="IPR046341">
    <property type="entry name" value="SET_dom_sf"/>
</dbReference>
<dbReference type="InterPro" id="IPR050331">
    <property type="entry name" value="Zinc_finger"/>
</dbReference>
<dbReference type="InterPro" id="IPR036236">
    <property type="entry name" value="Znf_C2H2_sf"/>
</dbReference>
<dbReference type="InterPro" id="IPR013087">
    <property type="entry name" value="Znf_C2H2_type"/>
</dbReference>
<dbReference type="InterPro" id="IPR017126">
    <property type="entry name" value="Znf_PRDM12"/>
</dbReference>
<dbReference type="PANTHER" id="PTHR16515">
    <property type="entry name" value="PR DOMAIN ZINC FINGER PROTEIN"/>
    <property type="match status" value="1"/>
</dbReference>
<dbReference type="PANTHER" id="PTHR16515:SF20">
    <property type="entry name" value="PR DOMAIN ZINC FINGER PROTEIN 12"/>
    <property type="match status" value="1"/>
</dbReference>
<dbReference type="Pfam" id="PF21549">
    <property type="entry name" value="PRDM2_PR"/>
    <property type="match status" value="1"/>
</dbReference>
<dbReference type="Pfam" id="PF00096">
    <property type="entry name" value="zf-C2H2"/>
    <property type="match status" value="2"/>
</dbReference>
<dbReference type="PIRSF" id="PIRSF037163">
    <property type="entry name" value="PRDM12"/>
    <property type="match status" value="1"/>
</dbReference>
<dbReference type="SMART" id="SM00317">
    <property type="entry name" value="SET"/>
    <property type="match status" value="1"/>
</dbReference>
<dbReference type="SMART" id="SM00355">
    <property type="entry name" value="ZnF_C2H2"/>
    <property type="match status" value="3"/>
</dbReference>
<dbReference type="SUPFAM" id="SSF57667">
    <property type="entry name" value="beta-beta-alpha zinc fingers"/>
    <property type="match status" value="2"/>
</dbReference>
<dbReference type="SUPFAM" id="SSF82199">
    <property type="entry name" value="SET domain"/>
    <property type="match status" value="1"/>
</dbReference>
<dbReference type="PROSITE" id="PS50280">
    <property type="entry name" value="SET"/>
    <property type="match status" value="1"/>
</dbReference>
<dbReference type="PROSITE" id="PS00028">
    <property type="entry name" value="ZINC_FINGER_C2H2_1"/>
    <property type="match status" value="3"/>
</dbReference>
<dbReference type="PROSITE" id="PS50157">
    <property type="entry name" value="ZINC_FINGER_C2H2_2"/>
    <property type="match status" value="3"/>
</dbReference>
<feature type="chain" id="PRO_0000416114" description="PR domain zinc finger protein 12">
    <location>
        <begin position="1"/>
        <end position="365"/>
    </location>
</feature>
<feature type="domain" description="SET" evidence="3">
    <location>
        <begin position="86"/>
        <end position="203"/>
    </location>
</feature>
<feature type="zinc finger region" description="C2H2-type 1" evidence="2">
    <location>
        <begin position="243"/>
        <end position="265"/>
    </location>
</feature>
<feature type="zinc finger region" description="C2H2-type 2" evidence="2">
    <location>
        <begin position="271"/>
        <end position="293"/>
    </location>
</feature>
<feature type="zinc finger region" description="C2H2-type 3" evidence="2">
    <location>
        <begin position="299"/>
        <end position="323"/>
    </location>
</feature>
<feature type="region of interest" description="Disordered" evidence="4">
    <location>
        <begin position="318"/>
        <end position="338"/>
    </location>
</feature>
<feature type="compositionally biased region" description="Low complexity" evidence="4">
    <location>
        <begin position="329"/>
        <end position="338"/>
    </location>
</feature>
<keyword id="KW-0010">Activator</keyword>
<keyword id="KW-0238">DNA-binding</keyword>
<keyword id="KW-0479">Metal-binding</keyword>
<keyword id="KW-0539">Nucleus</keyword>
<keyword id="KW-1185">Reference proteome</keyword>
<keyword id="KW-0677">Repeat</keyword>
<keyword id="KW-0678">Repressor</keyword>
<keyword id="KW-0804">Transcription</keyword>
<keyword id="KW-0805">Transcription regulation</keyword>
<keyword id="KW-0862">Zinc</keyword>
<keyword id="KW-0863">Zinc-finger</keyword>
<reference key="1">
    <citation type="journal article" date="2009" name="PLoS Biol.">
        <title>Lineage-specific biology revealed by a finished genome assembly of the mouse.</title>
        <authorList>
            <person name="Church D.M."/>
            <person name="Goodstadt L."/>
            <person name="Hillier L.W."/>
            <person name="Zody M.C."/>
            <person name="Goldstein S."/>
            <person name="She X."/>
            <person name="Bult C.J."/>
            <person name="Agarwala R."/>
            <person name="Cherry J.L."/>
            <person name="DiCuccio M."/>
            <person name="Hlavina W."/>
            <person name="Kapustin Y."/>
            <person name="Meric P."/>
            <person name="Maglott D."/>
            <person name="Birtle Z."/>
            <person name="Marques A.C."/>
            <person name="Graves T."/>
            <person name="Zhou S."/>
            <person name="Teague B."/>
            <person name="Potamousis K."/>
            <person name="Churas C."/>
            <person name="Place M."/>
            <person name="Herschleb J."/>
            <person name="Runnheim R."/>
            <person name="Forrest D."/>
            <person name="Amos-Landgraf J."/>
            <person name="Schwartz D.C."/>
            <person name="Cheng Z."/>
            <person name="Lindblad-Toh K."/>
            <person name="Eichler E.E."/>
            <person name="Ponting C.P."/>
        </authorList>
    </citation>
    <scope>NUCLEOTIDE SEQUENCE [LARGE SCALE GENOMIC DNA]</scope>
    <source>
        <strain>C57BL/6J</strain>
    </source>
</reference>
<reference key="2">
    <citation type="journal article" date="2015" name="Nat. Genet.">
        <title>Transcriptional regulator PRDM12 is essential for human pain perception.</title>
        <authorList>
            <person name="Chen Y.C."/>
            <person name="Auer-Grumbach M."/>
            <person name="Matsukawa S."/>
            <person name="Zitzelsberger M."/>
            <person name="Themistocleous A.C."/>
            <person name="Strom T.M."/>
            <person name="Samara C."/>
            <person name="Moore A.W."/>
            <person name="Cho L.T."/>
            <person name="Young G.T."/>
            <person name="Weiss C."/>
            <person name="Schabhuettl M."/>
            <person name="Stucka R."/>
            <person name="Schmid A.B."/>
            <person name="Parman Y."/>
            <person name="Graul-Neumann L."/>
            <person name="Heinritz W."/>
            <person name="Passarge E."/>
            <person name="Watson R.M."/>
            <person name="Hertz J.M."/>
            <person name="Moog U."/>
            <person name="Baumgartner M."/>
            <person name="Valente E.M."/>
            <person name="Pereira D."/>
            <person name="Restrepo C.M."/>
            <person name="Katona I."/>
            <person name="Dusl M."/>
            <person name="Stendel C."/>
            <person name="Wieland T."/>
            <person name="Stafford F."/>
            <person name="Reimann F."/>
            <person name="von Au K."/>
            <person name="Finke C."/>
            <person name="Willems P.J."/>
            <person name="Nahorski M.S."/>
            <person name="Shaikh S.S."/>
            <person name="Carvalho O.P."/>
            <person name="Nicholas A.K."/>
            <person name="Karbani G."/>
            <person name="McAleer M.A."/>
            <person name="Cilio M.R."/>
            <person name="McHugh J.C."/>
            <person name="Murphy S.M."/>
            <person name="Irvine A.D."/>
            <person name="Jensen U.B."/>
            <person name="Windhager R."/>
            <person name="Weis J."/>
            <person name="Bergmann C."/>
            <person name="Rautenstrauss B."/>
            <person name="Baets J."/>
            <person name="De Jonghe P."/>
            <person name="Reilly M.M."/>
            <person name="Kropatsch R."/>
            <person name="Kurth I."/>
            <person name="Chrast R."/>
            <person name="Michiue T."/>
            <person name="Bennett D.L."/>
            <person name="Woods C.G."/>
            <person name="Senderek J."/>
        </authorList>
    </citation>
    <scope>FUNCTION</scope>
    <scope>DEVELOPMENTAL STAGE</scope>
</reference>
<reference key="3">
    <citation type="journal article" date="2019" name="Cell Rep.">
        <title>PRDM12 Is Required for Initiation of the Nociceptive Neuron Lineage during Neurogenesis.</title>
        <authorList>
            <person name="Bartesaghi L."/>
            <person name="Wang Y."/>
            <person name="Fontanet P."/>
            <person name="Wanderoy S."/>
            <person name="Berger F."/>
            <person name="Wu H."/>
            <person name="Akkuratova N."/>
            <person name="Boucanova F."/>
            <person name="Medard J.J."/>
            <person name="Petitpre C."/>
            <person name="Landy M.A."/>
            <person name="Zhang M.D."/>
            <person name="Harrer P."/>
            <person name="Stendel C."/>
            <person name="Stucka R."/>
            <person name="Dusl M."/>
            <person name="Kastriti M.E."/>
            <person name="Croci L."/>
            <person name="Lai H.C."/>
            <person name="Consalez G.G."/>
            <person name="Pattyn A."/>
            <person name="Ernfors P."/>
            <person name="Senderek J."/>
            <person name="Adameyko I."/>
            <person name="Lallemend F."/>
            <person name="Hadjab S."/>
            <person name="Chrast R."/>
        </authorList>
    </citation>
    <scope>FUNCTION</scope>
</reference>
<reference key="4">
    <citation type="journal article" date="2021" name="Cell Rep.">
        <title>Loss of Prdm12 during development, but not in mature nociceptors, causes defects in pain sensation.</title>
        <authorList>
            <person name="Landy M.A."/>
            <person name="Goyal M."/>
            <person name="Casey K.M."/>
            <person name="Liu C."/>
            <person name="Lai H.C."/>
        </authorList>
    </citation>
    <scope>FUNCTION</scope>
    <scope>DISRUPTION PHENOTYPE</scope>
</reference>
<reference key="5">
    <citation type="journal article" date="2022" name="Pain">
        <title>Prdm12 modulates pain-related behavior by remodeling gene expression in mature nociceptors.</title>
        <authorList>
            <person name="Latragna A."/>
            <person name="Sabate San Jose A."/>
            <person name="Tsimpos P."/>
            <person name="Vermeiren S."/>
            <person name="Gualdani R."/>
            <person name="Chakrabarti S."/>
            <person name="Callejo G."/>
            <person name="Desiderio S."/>
            <person name="Shomroni O."/>
            <person name="Sitte M."/>
            <person name="Kricha S."/>
            <person name="Luypaert M."/>
            <person name="Vanhollebeke B."/>
            <person name="Laumet G."/>
            <person name="Salinas G."/>
            <person name="Smith E.S.J."/>
            <person name="Ris L."/>
            <person name="Bellefroid E.J."/>
        </authorList>
    </citation>
    <scope>FUNCTION</scope>
    <scope>DISRUPTION PHENOTYPE</scope>
</reference>
<protein>
    <recommendedName>
        <fullName>PR domain zinc finger protein 12</fullName>
    </recommendedName>
    <alternativeName>
        <fullName>PR domain-containing protein 12</fullName>
    </alternativeName>
</protein>
<evidence type="ECO:0000250" key="1">
    <source>
        <dbReference type="UniProtKB" id="Q9H4Q4"/>
    </source>
</evidence>
<evidence type="ECO:0000255" key="2">
    <source>
        <dbReference type="PROSITE-ProRule" id="PRU00042"/>
    </source>
</evidence>
<evidence type="ECO:0000255" key="3">
    <source>
        <dbReference type="PROSITE-ProRule" id="PRU00190"/>
    </source>
</evidence>
<evidence type="ECO:0000256" key="4">
    <source>
        <dbReference type="SAM" id="MobiDB-lite"/>
    </source>
</evidence>
<evidence type="ECO:0000269" key="5">
    <source>
    </source>
</evidence>
<evidence type="ECO:0000269" key="6">
    <source>
    </source>
</evidence>
<evidence type="ECO:0000269" key="7">
    <source>
    </source>
</evidence>
<evidence type="ECO:0000269" key="8">
    <source>
    </source>
</evidence>
<sequence>MMGSVLPAEALVLKTGLKAPGLALAEVITSDILHSFLYGRWRNVLGEQLLEDKSHHASPKTAFTAEVLAQSFSGEVQKLSSLVLPVEVIIAQSSIPGEGLGIFSKTWIKAGTEMGPFTGRVIAPEHVDICKNNNLMWEVFNEDGTVRYFIDASQEDHRSWMTYIKCARNEQEQNLEVVQIGTSIFYKAIEMIPPDQELLVWYGNSHNTFLGIPGVPGLEEEQKKNKHEDFHPADSATGTAGRMRCVICHRGFNSRSNLRSHMRIHTLDKPFVCRFCNRRFSQSSTLRNHVRLHTGERPYKCQVCQSAYSQLAGLRAHQKSARHRPPSTALQAHSPALPAPHAHAPALAAAAAAAAAAHHLPAMVL</sequence>
<comment type="function">
    <text evidence="5 6 7 8">Transcriptional regulator necessary for the development of nociceptive neurons, playing a key role in determining the nociceptive lineage from neural crest cell progenitors (PubMed:30917305, PubMed:33789102). Initiates neurogenesis and activates downstream pro-neuronal transcription factors, such as NEUROD1, BRN3A, and ISL1, specifically within nociceptive neurons, while repressing non-nociceptor cell fates (PubMed:30917305). Essential for the proper function of nociceptors in adults, influencing both their excitability and their gene expression, thereby impacting how these neurons respond to various pain stimuli (PubMed:34961757).</text>
</comment>
<comment type="subunit">
    <text evidence="1">Interacts with EHMT2.</text>
</comment>
<comment type="subcellular location">
    <subcellularLocation>
        <location evidence="1">Nucleus</location>
    </subcellularLocation>
</comment>
<comment type="developmental stage">
    <text evidence="5">Expression starts around 9.0 dpc in the neural folds, which give rise to neural crest cells. Neural crest cells develop into various tissues, including the sensory ganglia that contain nociceptor cell bodies. Prominently expressed in sensory spinal ganglia (dorsal root ganglia) but not in sympathetic ganglia during the time when sensory neurons emerge (10.5 dpc-13.5 dpc), mature and differentiate (14.5 dpc-postnatal day 14).</text>
</comment>
<comment type="disruption phenotype">
    <text evidence="7 8">Embryonic conditional knockout (KO), results in a selective loss of the developing nociceptor population and a reduced sensitivity to certain modalities of pain and itch (PubMed:33789102). Adult conditional KO results in altered neuronal excitability of dorsal root ganglia sensory neurons and dysregulation of a set of genes encoding receptors, channels, and neurotransmitters in nociceptors (PubMed:34961757). Shows altered pain responses, with normal sensitivity to thermal and mechanical stimuli but diminished responsiveness to capsaicin and increased sensitivity to formalin-induced inflammatory pain (PubMed:34961757).</text>
</comment>
<comment type="similarity">
    <text evidence="3">Belongs to the class V-like SAM-binding methyltransferase superfamily.</text>
</comment>
<proteinExistence type="evidence at transcript level"/>
<gene>
    <name type="primary">Prdm12</name>
    <name type="synonym">Gm998</name>
</gene>